<organism>
    <name type="scientific">Porphyromonas gingivalis</name>
    <name type="common">Bacteroides gingivalis</name>
    <dbReference type="NCBI Taxonomy" id="837"/>
    <lineage>
        <taxon>Bacteria</taxon>
        <taxon>Pseudomonadati</taxon>
        <taxon>Bacteroidota</taxon>
        <taxon>Bacteroidia</taxon>
        <taxon>Bacteroidales</taxon>
        <taxon>Porphyromonadaceae</taxon>
        <taxon>Porphyromonas</taxon>
    </lineage>
</organism>
<reference key="1">
    <citation type="journal article" date="1988" name="J. Bacteriol.">
        <title>Molecular cloning and sequencing of the gene encoding the fimbrial subunit protein of Bacteroides gingivalis.</title>
        <authorList>
            <person name="Dickinson D.P."/>
            <person name="Kubiniec M.A."/>
            <person name="Yoshimura F."/>
            <person name="Genco R.J."/>
        </authorList>
    </citation>
    <scope>NUCLEOTIDE SEQUENCE [GENOMIC DNA]</scope>
    <source>
        <strain>ATCC BAA-1703 / FDC 381</strain>
    </source>
</reference>
<reference key="2">
    <citation type="journal article" date="1993" name="Biochem. Biophys. Res. Commun.">
        <title>Molecular cloning and sequencing of the fimbrilin gene of Porphyromonas gingivalis strains and characterization of recombinant proteins.</title>
        <authorList>
            <person name="Fujiwara T."/>
            <person name="Morishima S."/>
            <person name="Takahashi I."/>
            <person name="Hamada S."/>
        </authorList>
    </citation>
    <scope>NUCLEOTIDE SEQUENCE [GENOMIC DNA]</scope>
    <source>
        <strain>ATCC BAA-1703 / FDC 381</strain>
        <strain>BH18/10</strain>
    </source>
</reference>
<reference key="3">
    <citation type="journal article" date="1996" name="Microbiol. Immunol.">
        <title>Sequence and product analyses of the four genes downstream from the fimbrilin gene(fimA) of the oral anaerobe Porphyromonas gingivalis.</title>
        <authorList>
            <person name="Watanabe K."/>
            <person name="Onoe T."/>
            <person name="Ozeki M."/>
            <person name="Shimizu Y."/>
            <person name="Sakayori T."/>
            <person name="Nakamura H."/>
            <person name="Yoshimura F."/>
        </authorList>
    </citation>
    <scope>NUCLEOTIDE SEQUENCE [GENOMIC DNA] OF 128-383</scope>
    <source>
        <strain>ATCC BAA-1703 / FDC 381</strain>
    </source>
</reference>
<reference key="4">
    <citation type="journal article" date="1991" name="Infect. Immun.">
        <title>Porphyromonas (Bacteroides) gingivalis fimbrillin: size, amino-terminal sequence, and antigenic heterogeneity.</title>
        <authorList>
            <person name="Lee J.Y."/>
            <person name="Sojar H.T."/>
            <person name="Bedi G.S."/>
            <person name="Genco R.J."/>
        </authorList>
    </citation>
    <scope>PROTEIN SEQUENCE OF 47-67</scope>
    <scope>FUNCTION</scope>
    <scope>SUBCELLULAR LOCATION</scope>
    <source>
        <strain>ATCC BAA-1703 / FDC 381</strain>
    </source>
</reference>
<reference key="5">
    <citation type="journal article" date="2002" name="Infect. Immun.">
        <title>Functional differences among FimA variants of Porphyromonas gingivalis and their effects on adhesion to and invasion of human epithelial cells.</title>
        <authorList>
            <person name="Nakagawa I."/>
            <person name="Amano A."/>
            <person name="Kuboniwa M."/>
            <person name="Nakamura T."/>
            <person name="Kawabata S."/>
            <person name="Hamada S."/>
        </authorList>
    </citation>
    <scope>FUNCTION</scope>
    <scope>CLASSIFICATION INTO TYPES</scope>
</reference>
<reference key="6">
    <citation type="journal article" date="2010" name="J. Dent. Res.">
        <title>FimB regulates FimA fimbriation in Porphyromonas gingivalis.</title>
        <authorList>
            <person name="Nagano K."/>
            <person name="Hasegawa Y."/>
            <person name="Murakami Y."/>
            <person name="Nishiyama S."/>
            <person name="Yoshimura F."/>
        </authorList>
    </citation>
    <scope>MISCELLANEOUS</scope>
</reference>
<reference key="7">
    <citation type="journal article" date="2013" name="Mol. Oral. Microbiol.">
        <title>Genetic and antigenic analyses of Porphyromonas gingivalis FimA fimbriae.</title>
        <authorList>
            <person name="Nagano K."/>
            <person name="Abiko Y."/>
            <person name="Yoshida Y."/>
            <person name="Yoshimura F."/>
        </authorList>
    </citation>
    <scope>CLASSIFICATION</scope>
</reference>
<sequence>MKKTKFFLLGLAALAMTACNKDNEAEPVTEGNATISVVLKTSNSNRAFGVGDDESKVAKLTVMVYNGEQQEAIKSAENATKVEDIKCSAGQRTLVVMANTGAMELVGKTLAEVKALTTELTAENQEAAGLIMTAEPKTIVLKAGKNYIGYSGTGEGNHIENDPLKIKRVHARMAFTEIKVQMSAAYDNIYTFVPEKIYGLIAKKQSNLFGATLVNADANYLTGSLTTFNGAYTPANYANVPWLSRNYVAPAADAPQGFYVLENDYSANGGTIHPTILCVYGKLQKNGADLAGADLAAAQAANWVDAEGKTYYPVLVNFNSNNYTYDSNYTPKNKIERNHKYDIKLTITGPGTNNPENPITESAHLNVQCTVAEWVLVGQNATW</sequence>
<proteinExistence type="evidence at protein level"/>
<feature type="signal peptide" evidence="3">
    <location>
        <begin position="1"/>
        <end position="18"/>
    </location>
</feature>
<feature type="propeptide" id="PRO_0000009156" evidence="5">
    <location>
        <begin position="19"/>
        <end position="46"/>
    </location>
</feature>
<feature type="chain" id="PRO_0000009157" description="Major fimbrium subunit FimA type-1">
    <location>
        <begin position="47"/>
        <end position="383"/>
    </location>
</feature>
<feature type="region of interest" description="Important for oligomerization and fimbrium assembly" evidence="2">
    <location>
        <begin position="374"/>
        <end position="383"/>
    </location>
</feature>
<feature type="site" description="Cleavage; by gingipain" evidence="1">
    <location>
        <begin position="46"/>
        <end position="47"/>
    </location>
</feature>
<feature type="lipid moiety-binding region" description="N-palmitoyl cysteine" evidence="3">
    <location>
        <position position="19"/>
    </location>
</feature>
<feature type="lipid moiety-binding region" description="S-diacylglycerol cysteine" evidence="3">
    <location>
        <position position="19"/>
    </location>
</feature>
<feature type="sequence variant" description="In strain: BH18/10.">
    <original>Y</original>
    <variation>C</variation>
    <location>
        <position position="247"/>
    </location>
</feature>
<feature type="sequence conflict" description="In Ref. 1; AAA16482." evidence="6" ref="1">
    <original>L</original>
    <variation>H</variation>
    <location>
        <position position="164"/>
    </location>
</feature>
<protein>
    <recommendedName>
        <fullName>Major fimbrium subunit FimA type-1</fullName>
        <shortName>FimA1</shortName>
    </recommendedName>
    <alternativeName>
        <fullName>Fimbrillin</fullName>
        <shortName>Fimbrilin</shortName>
    </alternativeName>
    <alternativeName>
        <fullName>Major fimbrial subunit protein type I</fullName>
    </alternativeName>
</protein>
<gene>
    <name type="primary">fimA</name>
</gene>
<dbReference type="EMBL" id="M19405">
    <property type="protein sequence ID" value="AAA16482.1"/>
    <property type="status" value="ALT_INIT"/>
    <property type="molecule type" value="Unassigned_DNA"/>
</dbReference>
<dbReference type="EMBL" id="D17794">
    <property type="protein sequence ID" value="BAA04620.1"/>
    <property type="status" value="ALT_INIT"/>
    <property type="molecule type" value="Genomic_DNA"/>
</dbReference>
<dbReference type="EMBL" id="D17796">
    <property type="protein sequence ID" value="BAA04622.1"/>
    <property type="status" value="ALT_INIT"/>
    <property type="molecule type" value="Genomic_DNA"/>
</dbReference>
<dbReference type="EMBL" id="D42067">
    <property type="protein sequence ID" value="BAA22414.1"/>
    <property type="molecule type" value="Genomic_DNA"/>
</dbReference>
<dbReference type="PIR" id="A27736">
    <property type="entry name" value="A27736"/>
</dbReference>
<dbReference type="PIR" id="JN0915">
    <property type="entry name" value="JN0915"/>
</dbReference>
<dbReference type="RefSeq" id="WP_012457306.1">
    <property type="nucleotide sequence ID" value="NZ_JAVIVL010000003.1"/>
</dbReference>
<dbReference type="SMR" id="P0C940"/>
<dbReference type="GO" id="GO:0009279">
    <property type="term" value="C:cell outer membrane"/>
    <property type="evidence" value="ECO:0007669"/>
    <property type="project" value="UniProtKB-SubCell"/>
</dbReference>
<dbReference type="GO" id="GO:0009289">
    <property type="term" value="C:pilus"/>
    <property type="evidence" value="ECO:0007669"/>
    <property type="project" value="UniProtKB-SubCell"/>
</dbReference>
<dbReference type="GO" id="GO:0005198">
    <property type="term" value="F:structural molecule activity"/>
    <property type="evidence" value="ECO:0007669"/>
    <property type="project" value="InterPro"/>
</dbReference>
<dbReference type="GO" id="GO:0007155">
    <property type="term" value="P:cell adhesion"/>
    <property type="evidence" value="ECO:0007669"/>
    <property type="project" value="UniProtKB-KW"/>
</dbReference>
<dbReference type="FunFam" id="2.60.40.2580:FF:000001">
    <property type="entry name" value="Major fimbrium subunit FimA type-2"/>
    <property type="match status" value="1"/>
</dbReference>
<dbReference type="FunFam" id="2.60.40.3690:FF:000001">
    <property type="entry name" value="Major fimbrium subunit FimA type-4"/>
    <property type="match status" value="1"/>
</dbReference>
<dbReference type="Gene3D" id="2.60.40.2580">
    <property type="match status" value="1"/>
</dbReference>
<dbReference type="Gene3D" id="2.60.40.3690">
    <property type="match status" value="1"/>
</dbReference>
<dbReference type="InterPro" id="IPR053878">
    <property type="entry name" value="FimA_C"/>
</dbReference>
<dbReference type="InterPro" id="IPR029141">
    <property type="entry name" value="FimA_N"/>
</dbReference>
<dbReference type="InterPro" id="IPR008110">
    <property type="entry name" value="Fimbrillin"/>
</dbReference>
<dbReference type="Pfam" id="PF22492">
    <property type="entry name" value="FimA4_C"/>
    <property type="match status" value="1"/>
</dbReference>
<dbReference type="Pfam" id="PF06321">
    <property type="entry name" value="P_gingi_FimA"/>
    <property type="match status" value="1"/>
</dbReference>
<dbReference type="PRINTS" id="PR01737">
    <property type="entry name" value="FIMBRILLIN"/>
</dbReference>
<dbReference type="PROSITE" id="PS51257">
    <property type="entry name" value="PROKAR_LIPOPROTEIN"/>
    <property type="match status" value="1"/>
</dbReference>
<comment type="function">
    <text evidence="1 4 5 6">Structural subunit of the major fimbriae (PubMed:1987052). These long, filamentous pili are attached to the cell surface; they mediate biofilm formation, adhesion onto host cells and onto other bacteria that are part of the oral microbiome. They play an important role in the invasion of periodontal tissues (PubMed:11748193, PubMed:1987052). Fimbriae and their constituents are major virulence factors. FimA proteins from different strains have highly divergent sequences, and this has been used for classification. The sequence-based classification correlates with pathogenicity.</text>
</comment>
<comment type="subunit">
    <text evidence="1 2">Fimbriae are composed of a major, structural subunit (FimA) and the minor components FimC, FimD and FimE (By similarity). Head-to-tail oligomerization of FimA molecules mediates assembly of the fimbrium stalk, while the minor components probably form the fimbrium tip. Linear, head-to-tail oligomerization of FimA is mediated by a conformation change, facilitating the insertion of a C-terminal beta-strand into a groove in the N-terminal domain of the following subunit (By similarity).</text>
</comment>
<comment type="subcellular location">
    <subcellularLocation>
        <location evidence="5">Fimbrium</location>
    </subcellularLocation>
    <subcellularLocation>
        <location evidence="1">Cell outer membrane</location>
    </subcellularLocation>
    <text evidence="1">Synthesized as palmitoylated precursor. The lipidated propeptide is removed during processing to the mature protein.</text>
</comment>
<comment type="PTM">
    <text evidence="1">Synthesized as palmitoylated lipoprotein precursor. Efficient export to the outer membrane and integration into fimbriae requires lipidation and subsequent proteolytic removal of the lipidated propeptide.</text>
</comment>
<comment type="miscellaneous">
    <text evidence="7">The name (major fimbrium subunit) does not indicate the abundance of the protein, but is derived from the greater length of the major fimbriae. In strain ATCC 33277 and strain 381, major fimbriae are 300 - 1600 nM in length and about 5 nm in diameter. In contrast, minor fimbriae are only about 80 - 120 nm long. This length difference is observed only in a small number of strains, including strain ATCC 33277 and strain 381, and is due to a loss of function mutation in FimB, a protein that restricts fimbrial length in other strains.</text>
</comment>
<comment type="similarity">
    <text evidence="6">Belongs to the bacteroidetes fimbrillin superfamily. FimA/Mfa1 family.</text>
</comment>
<comment type="sequence caution" evidence="6">
    <conflict type="erroneous initiation">
        <sequence resource="EMBL-CDS" id="AAA16482"/>
    </conflict>
    <text>Truncated N-terminus.</text>
</comment>
<comment type="sequence caution" evidence="6">
    <conflict type="erroneous initiation">
        <sequence resource="EMBL-CDS" id="BAA04620"/>
    </conflict>
    <text>Truncated N-terminus.</text>
</comment>
<comment type="sequence caution" evidence="6">
    <conflict type="erroneous initiation">
        <sequence resource="EMBL-CDS" id="BAA04622"/>
    </conflict>
    <text>Truncated N-terminus.</text>
</comment>
<name>FIMA1_PORGN</name>
<accession>P0C940</accession>
<accession>P13793</accession>
<accession>Q51821</accession>
<evidence type="ECO:0000250" key="1">
    <source>
        <dbReference type="UniProtKB" id="B2RH54"/>
    </source>
</evidence>
<evidence type="ECO:0000250" key="2">
    <source>
        <dbReference type="UniProtKB" id="P59914"/>
    </source>
</evidence>
<evidence type="ECO:0000255" key="3">
    <source>
        <dbReference type="PROSITE-ProRule" id="PRU00303"/>
    </source>
</evidence>
<evidence type="ECO:0000269" key="4">
    <source>
    </source>
</evidence>
<evidence type="ECO:0000269" key="5">
    <source>
    </source>
</evidence>
<evidence type="ECO:0000305" key="6"/>
<evidence type="ECO:0000305" key="7">
    <source>
    </source>
</evidence>
<keyword id="KW-0130">Cell adhesion</keyword>
<keyword id="KW-0998">Cell outer membrane</keyword>
<keyword id="KW-0903">Direct protein sequencing</keyword>
<keyword id="KW-0281">Fimbrium</keyword>
<keyword id="KW-0449">Lipoprotein</keyword>
<keyword id="KW-0472">Membrane</keyword>
<keyword id="KW-0564">Palmitate</keyword>
<keyword id="KW-0732">Signal</keyword>
<keyword id="KW-0843">Virulence</keyword>